<sequence>MDMLLNTARAWGLRLDQRQIEQFARYSAELRAWNTRVNLTAITDEEGIVARHFLDSLRCALSWGDAPSSLIDIGSGAGFPGLPLKILRPELRVALVESVGKKAAFLRHMITVLDLRDVTVLTARAETVGRDPQHREQYDVVTARAVAELATLAEYCLPLCRVHGRVLAPKGSDIADEVARARTAIERLGGRVIDVEPVTIPGVEPRTLVVIAKVAPTLAAYPRAVGVPARRPIH</sequence>
<protein>
    <recommendedName>
        <fullName evidence="1">Ribosomal RNA small subunit methyltransferase G</fullName>
        <ecNumber evidence="1">2.1.1.-</ecNumber>
    </recommendedName>
    <alternativeName>
        <fullName evidence="1">16S rRNA 7-methylguanosine methyltransferase</fullName>
        <shortName evidence="1">16S rRNA m7G methyltransferase</shortName>
    </alternativeName>
</protein>
<feature type="chain" id="PRO_0000335419" description="Ribosomal RNA small subunit methyltransferase G">
    <location>
        <begin position="1"/>
        <end position="234"/>
    </location>
</feature>
<feature type="binding site" evidence="1">
    <location>
        <position position="74"/>
    </location>
    <ligand>
        <name>S-adenosyl-L-methionine</name>
        <dbReference type="ChEBI" id="CHEBI:59789"/>
    </ligand>
</feature>
<feature type="binding site" evidence="1">
    <location>
        <position position="79"/>
    </location>
    <ligand>
        <name>S-adenosyl-L-methionine</name>
        <dbReference type="ChEBI" id="CHEBI:59789"/>
    </ligand>
</feature>
<feature type="binding site" evidence="1">
    <location>
        <begin position="125"/>
        <end position="126"/>
    </location>
    <ligand>
        <name>S-adenosyl-L-methionine</name>
        <dbReference type="ChEBI" id="CHEBI:59789"/>
    </ligand>
</feature>
<feature type="binding site" evidence="1">
    <location>
        <position position="144"/>
    </location>
    <ligand>
        <name>S-adenosyl-L-methionine</name>
        <dbReference type="ChEBI" id="CHEBI:59789"/>
    </ligand>
</feature>
<proteinExistence type="inferred from homology"/>
<reference key="1">
    <citation type="submission" date="2007-04" db="EMBL/GenBank/DDBJ databases">
        <title>Complete sequence of Roseiflexus sp. RS-1.</title>
        <authorList>
            <consortium name="US DOE Joint Genome Institute"/>
            <person name="Copeland A."/>
            <person name="Lucas S."/>
            <person name="Lapidus A."/>
            <person name="Barry K."/>
            <person name="Detter J.C."/>
            <person name="Glavina del Rio T."/>
            <person name="Hammon N."/>
            <person name="Israni S."/>
            <person name="Dalin E."/>
            <person name="Tice H."/>
            <person name="Pitluck S."/>
            <person name="Chertkov O."/>
            <person name="Brettin T."/>
            <person name="Bruce D."/>
            <person name="Han C."/>
            <person name="Schmutz J."/>
            <person name="Larimer F."/>
            <person name="Land M."/>
            <person name="Hauser L."/>
            <person name="Kyrpides N."/>
            <person name="Mikhailova N."/>
            <person name="Bryant D.A."/>
            <person name="Richardson P."/>
        </authorList>
    </citation>
    <scope>NUCLEOTIDE SEQUENCE [LARGE SCALE GENOMIC DNA]</scope>
    <source>
        <strain>RS-1</strain>
    </source>
</reference>
<comment type="function">
    <text evidence="1">Specifically methylates the N7 position of a guanine in 16S rRNA.</text>
</comment>
<comment type="subcellular location">
    <subcellularLocation>
        <location evidence="1">Cytoplasm</location>
    </subcellularLocation>
</comment>
<comment type="similarity">
    <text evidence="1">Belongs to the methyltransferase superfamily. RNA methyltransferase RsmG family.</text>
</comment>
<accession>A5UVE3</accession>
<evidence type="ECO:0000255" key="1">
    <source>
        <dbReference type="HAMAP-Rule" id="MF_00074"/>
    </source>
</evidence>
<dbReference type="EC" id="2.1.1.-" evidence="1"/>
<dbReference type="EMBL" id="CP000686">
    <property type="protein sequence ID" value="ABQ90596.1"/>
    <property type="molecule type" value="Genomic_DNA"/>
</dbReference>
<dbReference type="SMR" id="A5UVE3"/>
<dbReference type="STRING" id="357808.RoseRS_2216"/>
<dbReference type="KEGG" id="rrs:RoseRS_2216"/>
<dbReference type="eggNOG" id="COG0357">
    <property type="taxonomic scope" value="Bacteria"/>
</dbReference>
<dbReference type="HOGENOM" id="CLU_065341_0_0_0"/>
<dbReference type="OrthoDB" id="9808773at2"/>
<dbReference type="Proteomes" id="UP000006554">
    <property type="component" value="Chromosome"/>
</dbReference>
<dbReference type="GO" id="GO:0005829">
    <property type="term" value="C:cytosol"/>
    <property type="evidence" value="ECO:0007669"/>
    <property type="project" value="TreeGrafter"/>
</dbReference>
<dbReference type="GO" id="GO:0070043">
    <property type="term" value="F:rRNA (guanine-N7-)-methyltransferase activity"/>
    <property type="evidence" value="ECO:0007669"/>
    <property type="project" value="UniProtKB-UniRule"/>
</dbReference>
<dbReference type="FunFam" id="3.40.50.150:FF:000041">
    <property type="entry name" value="Ribosomal RNA small subunit methyltransferase G"/>
    <property type="match status" value="1"/>
</dbReference>
<dbReference type="Gene3D" id="3.40.50.150">
    <property type="entry name" value="Vaccinia Virus protein VP39"/>
    <property type="match status" value="1"/>
</dbReference>
<dbReference type="HAMAP" id="MF_00074">
    <property type="entry name" value="16SrRNA_methyltr_G"/>
    <property type="match status" value="1"/>
</dbReference>
<dbReference type="InterPro" id="IPR003682">
    <property type="entry name" value="rRNA_ssu_MeTfrase_G"/>
</dbReference>
<dbReference type="InterPro" id="IPR029063">
    <property type="entry name" value="SAM-dependent_MTases_sf"/>
</dbReference>
<dbReference type="NCBIfam" id="TIGR00138">
    <property type="entry name" value="rsmG_gidB"/>
    <property type="match status" value="1"/>
</dbReference>
<dbReference type="PANTHER" id="PTHR31760">
    <property type="entry name" value="S-ADENOSYL-L-METHIONINE-DEPENDENT METHYLTRANSFERASES SUPERFAMILY PROTEIN"/>
    <property type="match status" value="1"/>
</dbReference>
<dbReference type="PANTHER" id="PTHR31760:SF0">
    <property type="entry name" value="S-ADENOSYL-L-METHIONINE-DEPENDENT METHYLTRANSFERASES SUPERFAMILY PROTEIN"/>
    <property type="match status" value="1"/>
</dbReference>
<dbReference type="Pfam" id="PF02527">
    <property type="entry name" value="GidB"/>
    <property type="match status" value="1"/>
</dbReference>
<dbReference type="PIRSF" id="PIRSF003078">
    <property type="entry name" value="GidB"/>
    <property type="match status" value="1"/>
</dbReference>
<dbReference type="SUPFAM" id="SSF53335">
    <property type="entry name" value="S-adenosyl-L-methionine-dependent methyltransferases"/>
    <property type="match status" value="1"/>
</dbReference>
<keyword id="KW-0963">Cytoplasm</keyword>
<keyword id="KW-0489">Methyltransferase</keyword>
<keyword id="KW-0698">rRNA processing</keyword>
<keyword id="KW-0949">S-adenosyl-L-methionine</keyword>
<keyword id="KW-0808">Transferase</keyword>
<organism>
    <name type="scientific">Roseiflexus sp. (strain RS-1)</name>
    <dbReference type="NCBI Taxonomy" id="357808"/>
    <lineage>
        <taxon>Bacteria</taxon>
        <taxon>Bacillati</taxon>
        <taxon>Chloroflexota</taxon>
        <taxon>Chloroflexia</taxon>
        <taxon>Chloroflexales</taxon>
        <taxon>Roseiflexineae</taxon>
        <taxon>Roseiflexaceae</taxon>
        <taxon>Roseiflexus</taxon>
    </lineage>
</organism>
<name>RSMG_ROSS1</name>
<gene>
    <name evidence="1" type="primary">rsmG</name>
    <name type="ordered locus">RoseRS_2216</name>
</gene>